<proteinExistence type="inferred from homology"/>
<protein>
    <recommendedName>
        <fullName evidence="1">Glycerol kinase 1</fullName>
        <ecNumber evidence="1">2.7.1.30</ecNumber>
    </recommendedName>
    <alternativeName>
        <fullName evidence="1">ATP:glycerol 3-phosphotransferase 1</fullName>
    </alternativeName>
    <alternativeName>
        <fullName evidence="1">Glycerokinase 1</fullName>
        <shortName evidence="1">GK 1</shortName>
    </alternativeName>
</protein>
<name>GLPK1_STRCO</name>
<dbReference type="EC" id="2.7.1.30" evidence="1"/>
<dbReference type="EMBL" id="AL939105">
    <property type="protein sequence ID" value="CAB58269.1"/>
    <property type="molecule type" value="Genomic_DNA"/>
</dbReference>
<dbReference type="RefSeq" id="NP_624825.1">
    <property type="nucleotide sequence ID" value="NC_003888.3"/>
</dbReference>
<dbReference type="SMR" id="Q9RJM2"/>
<dbReference type="FunCoup" id="Q9RJM2">
    <property type="interactions" value="258"/>
</dbReference>
<dbReference type="STRING" id="100226.gene:17758092"/>
<dbReference type="PaxDb" id="100226-SCO0509"/>
<dbReference type="KEGG" id="sco:SCO0509"/>
<dbReference type="PATRIC" id="fig|100226.15.peg.489"/>
<dbReference type="eggNOG" id="COG0554">
    <property type="taxonomic scope" value="Bacteria"/>
</dbReference>
<dbReference type="HOGENOM" id="CLU_009281_2_3_11"/>
<dbReference type="InParanoid" id="Q9RJM2"/>
<dbReference type="OrthoDB" id="9805576at2"/>
<dbReference type="PhylomeDB" id="Q9RJM2"/>
<dbReference type="UniPathway" id="UPA00618">
    <property type="reaction ID" value="UER00672"/>
</dbReference>
<dbReference type="Proteomes" id="UP000001973">
    <property type="component" value="Chromosome"/>
</dbReference>
<dbReference type="GO" id="GO:0005829">
    <property type="term" value="C:cytosol"/>
    <property type="evidence" value="ECO:0000318"/>
    <property type="project" value="GO_Central"/>
</dbReference>
<dbReference type="GO" id="GO:0005524">
    <property type="term" value="F:ATP binding"/>
    <property type="evidence" value="ECO:0007669"/>
    <property type="project" value="UniProtKB-UniRule"/>
</dbReference>
<dbReference type="GO" id="GO:0004370">
    <property type="term" value="F:glycerol kinase activity"/>
    <property type="evidence" value="ECO:0000250"/>
    <property type="project" value="UniProtKB"/>
</dbReference>
<dbReference type="GO" id="GO:0019563">
    <property type="term" value="P:glycerol catabolic process"/>
    <property type="evidence" value="ECO:0000318"/>
    <property type="project" value="GO_Central"/>
</dbReference>
<dbReference type="GO" id="GO:0006071">
    <property type="term" value="P:glycerol metabolic process"/>
    <property type="evidence" value="ECO:0000250"/>
    <property type="project" value="UniProtKB"/>
</dbReference>
<dbReference type="GO" id="GO:0006072">
    <property type="term" value="P:glycerol-3-phosphate metabolic process"/>
    <property type="evidence" value="ECO:0007669"/>
    <property type="project" value="InterPro"/>
</dbReference>
<dbReference type="CDD" id="cd07769">
    <property type="entry name" value="ASKHA_NBD_FGGY_GK"/>
    <property type="match status" value="1"/>
</dbReference>
<dbReference type="FunFam" id="3.30.420.40:FF:000007">
    <property type="entry name" value="Glycerol kinase"/>
    <property type="match status" value="1"/>
</dbReference>
<dbReference type="FunFam" id="3.30.420.40:FF:000008">
    <property type="entry name" value="Glycerol kinase"/>
    <property type="match status" value="1"/>
</dbReference>
<dbReference type="Gene3D" id="3.30.420.40">
    <property type="match status" value="2"/>
</dbReference>
<dbReference type="HAMAP" id="MF_00186">
    <property type="entry name" value="Glycerol_kin"/>
    <property type="match status" value="1"/>
</dbReference>
<dbReference type="InterPro" id="IPR043129">
    <property type="entry name" value="ATPase_NBD"/>
</dbReference>
<dbReference type="InterPro" id="IPR000577">
    <property type="entry name" value="Carb_kinase_FGGY"/>
</dbReference>
<dbReference type="InterPro" id="IPR018483">
    <property type="entry name" value="Carb_kinase_FGGY_CS"/>
</dbReference>
<dbReference type="InterPro" id="IPR018485">
    <property type="entry name" value="FGGY_C"/>
</dbReference>
<dbReference type="InterPro" id="IPR018484">
    <property type="entry name" value="FGGY_N"/>
</dbReference>
<dbReference type="InterPro" id="IPR005999">
    <property type="entry name" value="Glycerol_kin"/>
</dbReference>
<dbReference type="NCBIfam" id="TIGR01311">
    <property type="entry name" value="glycerol_kin"/>
    <property type="match status" value="1"/>
</dbReference>
<dbReference type="NCBIfam" id="NF000756">
    <property type="entry name" value="PRK00047.1"/>
    <property type="match status" value="1"/>
</dbReference>
<dbReference type="PANTHER" id="PTHR10196:SF69">
    <property type="entry name" value="GLYCEROL KINASE"/>
    <property type="match status" value="1"/>
</dbReference>
<dbReference type="PANTHER" id="PTHR10196">
    <property type="entry name" value="SUGAR KINASE"/>
    <property type="match status" value="1"/>
</dbReference>
<dbReference type="Pfam" id="PF02782">
    <property type="entry name" value="FGGY_C"/>
    <property type="match status" value="1"/>
</dbReference>
<dbReference type="Pfam" id="PF00370">
    <property type="entry name" value="FGGY_N"/>
    <property type="match status" value="1"/>
</dbReference>
<dbReference type="PIRSF" id="PIRSF000538">
    <property type="entry name" value="GlpK"/>
    <property type="match status" value="1"/>
</dbReference>
<dbReference type="SUPFAM" id="SSF53067">
    <property type="entry name" value="Actin-like ATPase domain"/>
    <property type="match status" value="2"/>
</dbReference>
<dbReference type="PROSITE" id="PS00933">
    <property type="entry name" value="FGGY_KINASES_1"/>
    <property type="match status" value="1"/>
</dbReference>
<dbReference type="PROSITE" id="PS00445">
    <property type="entry name" value="FGGY_KINASES_2"/>
    <property type="match status" value="1"/>
</dbReference>
<reference key="1">
    <citation type="journal article" date="2002" name="Nature">
        <title>Complete genome sequence of the model actinomycete Streptomyces coelicolor A3(2).</title>
        <authorList>
            <person name="Bentley S.D."/>
            <person name="Chater K.F."/>
            <person name="Cerdeno-Tarraga A.-M."/>
            <person name="Challis G.L."/>
            <person name="Thomson N.R."/>
            <person name="James K.D."/>
            <person name="Harris D.E."/>
            <person name="Quail M.A."/>
            <person name="Kieser H."/>
            <person name="Harper D."/>
            <person name="Bateman A."/>
            <person name="Brown S."/>
            <person name="Chandra G."/>
            <person name="Chen C.W."/>
            <person name="Collins M."/>
            <person name="Cronin A."/>
            <person name="Fraser A."/>
            <person name="Goble A."/>
            <person name="Hidalgo J."/>
            <person name="Hornsby T."/>
            <person name="Howarth S."/>
            <person name="Huang C.-H."/>
            <person name="Kieser T."/>
            <person name="Larke L."/>
            <person name="Murphy L.D."/>
            <person name="Oliver K."/>
            <person name="O'Neil S."/>
            <person name="Rabbinowitsch E."/>
            <person name="Rajandream M.A."/>
            <person name="Rutherford K.M."/>
            <person name="Rutter S."/>
            <person name="Seeger K."/>
            <person name="Saunders D."/>
            <person name="Sharp S."/>
            <person name="Squares R."/>
            <person name="Squares S."/>
            <person name="Taylor K."/>
            <person name="Warren T."/>
            <person name="Wietzorrek A."/>
            <person name="Woodward J.R."/>
            <person name="Barrell B.G."/>
            <person name="Parkhill J."/>
            <person name="Hopwood D.A."/>
        </authorList>
    </citation>
    <scope>NUCLEOTIDE SEQUENCE [LARGE SCALE GENOMIC DNA]</scope>
    <source>
        <strain>ATCC BAA-471 / A3(2) / M145</strain>
    </source>
</reference>
<organism>
    <name type="scientific">Streptomyces coelicolor (strain ATCC BAA-471 / A3(2) / M145)</name>
    <dbReference type="NCBI Taxonomy" id="100226"/>
    <lineage>
        <taxon>Bacteria</taxon>
        <taxon>Bacillati</taxon>
        <taxon>Actinomycetota</taxon>
        <taxon>Actinomycetes</taxon>
        <taxon>Kitasatosporales</taxon>
        <taxon>Streptomycetaceae</taxon>
        <taxon>Streptomyces</taxon>
        <taxon>Streptomyces albidoflavus group</taxon>
    </lineage>
</organism>
<keyword id="KW-0067">ATP-binding</keyword>
<keyword id="KW-0319">Glycerol metabolism</keyword>
<keyword id="KW-0418">Kinase</keyword>
<keyword id="KW-0547">Nucleotide-binding</keyword>
<keyword id="KW-1185">Reference proteome</keyword>
<keyword id="KW-0808">Transferase</keyword>
<evidence type="ECO:0000255" key="1">
    <source>
        <dbReference type="HAMAP-Rule" id="MF_00186"/>
    </source>
</evidence>
<gene>
    <name evidence="1" type="primary">glpK1</name>
    <name type="synonym">glpK2</name>
    <name type="ordered locus">SCO0509</name>
    <name type="ORF">SCF6.05</name>
</gene>
<comment type="function">
    <text evidence="1">Key enzyme in the regulation of glycerol uptake and metabolism. Catalyzes the phosphorylation of glycerol to yield sn-glycerol 3-phosphate.</text>
</comment>
<comment type="catalytic activity">
    <reaction evidence="1">
        <text>glycerol + ATP = sn-glycerol 3-phosphate + ADP + H(+)</text>
        <dbReference type="Rhea" id="RHEA:21644"/>
        <dbReference type="ChEBI" id="CHEBI:15378"/>
        <dbReference type="ChEBI" id="CHEBI:17754"/>
        <dbReference type="ChEBI" id="CHEBI:30616"/>
        <dbReference type="ChEBI" id="CHEBI:57597"/>
        <dbReference type="ChEBI" id="CHEBI:456216"/>
        <dbReference type="EC" id="2.7.1.30"/>
    </reaction>
</comment>
<comment type="activity regulation">
    <text evidence="1">Inhibited by fructose 1,6-bisphosphate (FBP).</text>
</comment>
<comment type="pathway">
    <text evidence="1">Polyol metabolism; glycerol degradation via glycerol kinase pathway; sn-glycerol 3-phosphate from glycerol: step 1/1.</text>
</comment>
<comment type="similarity">
    <text evidence="1">Belongs to the FGGY kinase family.</text>
</comment>
<sequence length="507" mass="55553">MADFIGAVDQGTTSTRFMIFDHGGNEVAKHQLEHEQILPRSGWVEHDPVEIWERTNSVMQNALRNGGLSGTDLAAIGITNQRETTVVWDPRTGRPYYNAIVWQDTRTDAIAANLERSGRGDVIRRKAGLPPATYFSGGKIQWILENVDGVREAAEQGHAVFGNTDSWVLWNLTGGPDGGIHATDVTNASRTMLMNLETLDWDDELLGFFGIPRGMLPTINPSSHPEAFGTTRTSRPLRAAVPITGVLGDQHAATVGQVCFSPGEAKNTYGTGNFLVLNTGTELVRSQHGLLTTVAYQFGDNPPVYALEGSIAVTGSAVQWLRDQMKIIKTAAESEELARTVEDNGGMYFVPAFSGLFAPYWRSDARGAIVGLARYNDNAHLARATLEAICYQSRDVVVAMEQDSSVHLDVLRVDGGVTANDLCMQIQADILGVPVSRPVVAETTALGAAYAAGLATGFWRHTDELRTHWSESRRWEPQWSEERRAQGYAGWKMAVERTLDWVKVPES</sequence>
<feature type="chain" id="PRO_0000059503" description="Glycerol kinase 1">
    <location>
        <begin position="1"/>
        <end position="507"/>
    </location>
</feature>
<feature type="binding site" evidence="1">
    <location>
        <position position="12"/>
    </location>
    <ligand>
        <name>ADP</name>
        <dbReference type="ChEBI" id="CHEBI:456216"/>
    </ligand>
</feature>
<feature type="binding site" evidence="1">
    <location>
        <position position="12"/>
    </location>
    <ligand>
        <name>ATP</name>
        <dbReference type="ChEBI" id="CHEBI:30616"/>
    </ligand>
</feature>
<feature type="binding site" evidence="1">
    <location>
        <position position="12"/>
    </location>
    <ligand>
        <name>sn-glycerol 3-phosphate</name>
        <dbReference type="ChEBI" id="CHEBI:57597"/>
    </ligand>
</feature>
<feature type="binding site" evidence="1">
    <location>
        <position position="13"/>
    </location>
    <ligand>
        <name>ATP</name>
        <dbReference type="ChEBI" id="CHEBI:30616"/>
    </ligand>
</feature>
<feature type="binding site" evidence="1">
    <location>
        <position position="14"/>
    </location>
    <ligand>
        <name>ATP</name>
        <dbReference type="ChEBI" id="CHEBI:30616"/>
    </ligand>
</feature>
<feature type="binding site" evidence="1">
    <location>
        <position position="16"/>
    </location>
    <ligand>
        <name>ADP</name>
        <dbReference type="ChEBI" id="CHEBI:456216"/>
    </ligand>
</feature>
<feature type="binding site" evidence="1">
    <location>
        <position position="82"/>
    </location>
    <ligand>
        <name>glycerol</name>
        <dbReference type="ChEBI" id="CHEBI:17754"/>
    </ligand>
</feature>
<feature type="binding site" evidence="1">
    <location>
        <position position="82"/>
    </location>
    <ligand>
        <name>sn-glycerol 3-phosphate</name>
        <dbReference type="ChEBI" id="CHEBI:57597"/>
    </ligand>
</feature>
<feature type="binding site" evidence="1">
    <location>
        <position position="83"/>
    </location>
    <ligand>
        <name>glycerol</name>
        <dbReference type="ChEBI" id="CHEBI:17754"/>
    </ligand>
</feature>
<feature type="binding site" evidence="1">
    <location>
        <position position="83"/>
    </location>
    <ligand>
        <name>sn-glycerol 3-phosphate</name>
        <dbReference type="ChEBI" id="CHEBI:57597"/>
    </ligand>
</feature>
<feature type="binding site" evidence="1">
    <location>
        <position position="134"/>
    </location>
    <ligand>
        <name>glycerol</name>
        <dbReference type="ChEBI" id="CHEBI:17754"/>
    </ligand>
</feature>
<feature type="binding site" evidence="1">
    <location>
        <position position="134"/>
    </location>
    <ligand>
        <name>sn-glycerol 3-phosphate</name>
        <dbReference type="ChEBI" id="CHEBI:57597"/>
    </ligand>
</feature>
<feature type="binding site" evidence="1">
    <location>
        <position position="249"/>
    </location>
    <ligand>
        <name>glycerol</name>
        <dbReference type="ChEBI" id="CHEBI:17754"/>
    </ligand>
</feature>
<feature type="binding site" evidence="1">
    <location>
        <position position="249"/>
    </location>
    <ligand>
        <name>sn-glycerol 3-phosphate</name>
        <dbReference type="ChEBI" id="CHEBI:57597"/>
    </ligand>
</feature>
<feature type="binding site" evidence="1">
    <location>
        <position position="250"/>
    </location>
    <ligand>
        <name>glycerol</name>
        <dbReference type="ChEBI" id="CHEBI:17754"/>
    </ligand>
</feature>
<feature type="binding site" evidence="1">
    <location>
        <position position="271"/>
    </location>
    <ligand>
        <name>ADP</name>
        <dbReference type="ChEBI" id="CHEBI:456216"/>
    </ligand>
</feature>
<feature type="binding site" evidence="1">
    <location>
        <position position="271"/>
    </location>
    <ligand>
        <name>ATP</name>
        <dbReference type="ChEBI" id="CHEBI:30616"/>
    </ligand>
</feature>
<feature type="binding site" evidence="1">
    <location>
        <position position="315"/>
    </location>
    <ligand>
        <name>ADP</name>
        <dbReference type="ChEBI" id="CHEBI:456216"/>
    </ligand>
</feature>
<feature type="binding site" evidence="1">
    <location>
        <position position="315"/>
    </location>
    <ligand>
        <name>ATP</name>
        <dbReference type="ChEBI" id="CHEBI:30616"/>
    </ligand>
</feature>
<feature type="binding site" evidence="1">
    <location>
        <position position="319"/>
    </location>
    <ligand>
        <name>ATP</name>
        <dbReference type="ChEBI" id="CHEBI:30616"/>
    </ligand>
</feature>
<feature type="binding site" evidence="1">
    <location>
        <position position="416"/>
    </location>
    <ligand>
        <name>ADP</name>
        <dbReference type="ChEBI" id="CHEBI:456216"/>
    </ligand>
</feature>
<feature type="binding site" evidence="1">
    <location>
        <position position="416"/>
    </location>
    <ligand>
        <name>ATP</name>
        <dbReference type="ChEBI" id="CHEBI:30616"/>
    </ligand>
</feature>
<feature type="binding site" evidence="1">
    <location>
        <position position="420"/>
    </location>
    <ligand>
        <name>ADP</name>
        <dbReference type="ChEBI" id="CHEBI:456216"/>
    </ligand>
</feature>
<accession>Q9RJM2</accession>